<accession>Q2NVZ0</accession>
<sequence>MAKSDYYEILGVSRDAEEREIKKAYKRQAMKFHPDRNRGNAEAEAKFKEIKEAYEVLTDAQKRAAYDQYGHAAFEQGGMGGGGASGADFSDIFGDVFGDIFGGGRRQRVSRGADLRYNMELSLEEAVRGVTREIRIPTLEECDVCHGSGAKPGTSAVTCPTCHGQGQVQMRQGFFAIQQTCPTCQGQGKIIKDPCTKCHGHGRVEKSKTLSVKIPAGVDTGDRIRLSGEGEVGEHGAAAGDLYVQVQVCKHPIFEREENNLYCEVPINFAMAALGGEIEVPTLDGRVKLKVPAETQTGKLFRMRGKGVKSVRGGSQGDLLCRVVVETPVKLNERQKQLLRELEESFGGPSGDQNSPRSKSFLDGVKKFFDDLTR</sequence>
<organism>
    <name type="scientific">Sodalis glossinidius (strain morsitans)</name>
    <dbReference type="NCBI Taxonomy" id="343509"/>
    <lineage>
        <taxon>Bacteria</taxon>
        <taxon>Pseudomonadati</taxon>
        <taxon>Pseudomonadota</taxon>
        <taxon>Gammaproteobacteria</taxon>
        <taxon>Enterobacterales</taxon>
        <taxon>Bruguierivoracaceae</taxon>
        <taxon>Sodalis</taxon>
    </lineage>
</organism>
<evidence type="ECO:0000255" key="1">
    <source>
        <dbReference type="HAMAP-Rule" id="MF_01152"/>
    </source>
</evidence>
<comment type="function">
    <text evidence="1">Participates actively in the response to hyperosmotic and heat shock by preventing the aggregation of stress-denatured proteins and by disaggregating proteins, also in an autonomous, DnaK-independent fashion. Unfolded proteins bind initially to DnaJ; upon interaction with the DnaJ-bound protein, DnaK hydrolyzes its bound ATP, resulting in the formation of a stable complex. GrpE releases ADP from DnaK; ATP binding to DnaK triggers the release of the substrate protein, thus completing the reaction cycle. Several rounds of ATP-dependent interactions between DnaJ, DnaK and GrpE are required for fully efficient folding. Also involved, together with DnaK and GrpE, in the DNA replication of plasmids through activation of initiation proteins.</text>
</comment>
<comment type="cofactor">
    <cofactor evidence="1">
        <name>Zn(2+)</name>
        <dbReference type="ChEBI" id="CHEBI:29105"/>
    </cofactor>
    <text evidence="1">Binds 2 Zn(2+) ions per monomer.</text>
</comment>
<comment type="subunit">
    <text evidence="1">Homodimer.</text>
</comment>
<comment type="subcellular location">
    <subcellularLocation>
        <location evidence="1">Cytoplasm</location>
    </subcellularLocation>
</comment>
<comment type="domain">
    <text evidence="1">The J domain is necessary and sufficient to stimulate DnaK ATPase activity. Zinc center 1 plays an important role in the autonomous, DnaK-independent chaperone activity of DnaJ. Zinc center 2 is essential for interaction with DnaK and for DnaJ activity.</text>
</comment>
<comment type="similarity">
    <text evidence="1">Belongs to the DnaJ family.</text>
</comment>
<keyword id="KW-0143">Chaperone</keyword>
<keyword id="KW-0963">Cytoplasm</keyword>
<keyword id="KW-0235">DNA replication</keyword>
<keyword id="KW-0479">Metal-binding</keyword>
<keyword id="KW-0677">Repeat</keyword>
<keyword id="KW-0346">Stress response</keyword>
<keyword id="KW-0862">Zinc</keyword>
<keyword id="KW-0863">Zinc-finger</keyword>
<dbReference type="EMBL" id="AP008232">
    <property type="protein sequence ID" value="BAE73685.1"/>
    <property type="molecule type" value="Genomic_DNA"/>
</dbReference>
<dbReference type="RefSeq" id="WP_011410273.1">
    <property type="nucleotide sequence ID" value="NC_007712.1"/>
</dbReference>
<dbReference type="SMR" id="Q2NVZ0"/>
<dbReference type="STRING" id="343509.SG0410"/>
<dbReference type="KEGG" id="sgl:SG0410"/>
<dbReference type="eggNOG" id="COG0484">
    <property type="taxonomic scope" value="Bacteria"/>
</dbReference>
<dbReference type="HOGENOM" id="CLU_017633_0_7_6"/>
<dbReference type="OrthoDB" id="9779889at2"/>
<dbReference type="BioCyc" id="SGLO343509:SGP1_RS03800-MONOMER"/>
<dbReference type="Proteomes" id="UP000001932">
    <property type="component" value="Chromosome"/>
</dbReference>
<dbReference type="GO" id="GO:0005737">
    <property type="term" value="C:cytoplasm"/>
    <property type="evidence" value="ECO:0007669"/>
    <property type="project" value="UniProtKB-SubCell"/>
</dbReference>
<dbReference type="GO" id="GO:0005524">
    <property type="term" value="F:ATP binding"/>
    <property type="evidence" value="ECO:0007669"/>
    <property type="project" value="InterPro"/>
</dbReference>
<dbReference type="GO" id="GO:0031072">
    <property type="term" value="F:heat shock protein binding"/>
    <property type="evidence" value="ECO:0007669"/>
    <property type="project" value="InterPro"/>
</dbReference>
<dbReference type="GO" id="GO:0051082">
    <property type="term" value="F:unfolded protein binding"/>
    <property type="evidence" value="ECO:0007669"/>
    <property type="project" value="UniProtKB-UniRule"/>
</dbReference>
<dbReference type="GO" id="GO:0008270">
    <property type="term" value="F:zinc ion binding"/>
    <property type="evidence" value="ECO:0007669"/>
    <property type="project" value="UniProtKB-UniRule"/>
</dbReference>
<dbReference type="GO" id="GO:0051085">
    <property type="term" value="P:chaperone cofactor-dependent protein refolding"/>
    <property type="evidence" value="ECO:0007669"/>
    <property type="project" value="TreeGrafter"/>
</dbReference>
<dbReference type="GO" id="GO:0006260">
    <property type="term" value="P:DNA replication"/>
    <property type="evidence" value="ECO:0007669"/>
    <property type="project" value="UniProtKB-KW"/>
</dbReference>
<dbReference type="GO" id="GO:0042026">
    <property type="term" value="P:protein refolding"/>
    <property type="evidence" value="ECO:0007669"/>
    <property type="project" value="TreeGrafter"/>
</dbReference>
<dbReference type="GO" id="GO:0009408">
    <property type="term" value="P:response to heat"/>
    <property type="evidence" value="ECO:0007669"/>
    <property type="project" value="InterPro"/>
</dbReference>
<dbReference type="CDD" id="cd06257">
    <property type="entry name" value="DnaJ"/>
    <property type="match status" value="1"/>
</dbReference>
<dbReference type="CDD" id="cd10747">
    <property type="entry name" value="DnaJ_C"/>
    <property type="match status" value="1"/>
</dbReference>
<dbReference type="CDD" id="cd10719">
    <property type="entry name" value="DnaJ_zf"/>
    <property type="match status" value="1"/>
</dbReference>
<dbReference type="FunFam" id="1.10.287.110:FF:000003">
    <property type="entry name" value="Molecular chaperone DnaJ"/>
    <property type="match status" value="1"/>
</dbReference>
<dbReference type="FunFam" id="2.10.230.10:FF:000002">
    <property type="entry name" value="Molecular chaperone DnaJ"/>
    <property type="match status" value="1"/>
</dbReference>
<dbReference type="FunFam" id="2.60.260.20:FF:000004">
    <property type="entry name" value="Molecular chaperone DnaJ"/>
    <property type="match status" value="1"/>
</dbReference>
<dbReference type="Gene3D" id="1.10.287.110">
    <property type="entry name" value="DnaJ domain"/>
    <property type="match status" value="1"/>
</dbReference>
<dbReference type="Gene3D" id="2.10.230.10">
    <property type="entry name" value="Heat shock protein DnaJ, cysteine-rich domain"/>
    <property type="match status" value="1"/>
</dbReference>
<dbReference type="Gene3D" id="2.60.260.20">
    <property type="entry name" value="Urease metallochaperone UreE, N-terminal domain"/>
    <property type="match status" value="2"/>
</dbReference>
<dbReference type="HAMAP" id="MF_01152">
    <property type="entry name" value="DnaJ"/>
    <property type="match status" value="1"/>
</dbReference>
<dbReference type="InterPro" id="IPR012724">
    <property type="entry name" value="DnaJ"/>
</dbReference>
<dbReference type="InterPro" id="IPR002939">
    <property type="entry name" value="DnaJ_C"/>
</dbReference>
<dbReference type="InterPro" id="IPR001623">
    <property type="entry name" value="DnaJ_domain"/>
</dbReference>
<dbReference type="InterPro" id="IPR018253">
    <property type="entry name" value="DnaJ_domain_CS"/>
</dbReference>
<dbReference type="InterPro" id="IPR008971">
    <property type="entry name" value="HSP40/DnaJ_pept-bd"/>
</dbReference>
<dbReference type="InterPro" id="IPR001305">
    <property type="entry name" value="HSP_DnaJ_Cys-rich_dom"/>
</dbReference>
<dbReference type="InterPro" id="IPR036410">
    <property type="entry name" value="HSP_DnaJ_Cys-rich_dom_sf"/>
</dbReference>
<dbReference type="InterPro" id="IPR036869">
    <property type="entry name" value="J_dom_sf"/>
</dbReference>
<dbReference type="NCBIfam" id="TIGR02349">
    <property type="entry name" value="DnaJ_bact"/>
    <property type="match status" value="1"/>
</dbReference>
<dbReference type="NCBIfam" id="NF008035">
    <property type="entry name" value="PRK10767.1"/>
    <property type="match status" value="1"/>
</dbReference>
<dbReference type="PANTHER" id="PTHR43096:SF48">
    <property type="entry name" value="CHAPERONE PROTEIN DNAJ"/>
    <property type="match status" value="1"/>
</dbReference>
<dbReference type="PANTHER" id="PTHR43096">
    <property type="entry name" value="DNAJ HOMOLOG 1, MITOCHONDRIAL-RELATED"/>
    <property type="match status" value="1"/>
</dbReference>
<dbReference type="Pfam" id="PF00226">
    <property type="entry name" value="DnaJ"/>
    <property type="match status" value="1"/>
</dbReference>
<dbReference type="Pfam" id="PF01556">
    <property type="entry name" value="DnaJ_C"/>
    <property type="match status" value="1"/>
</dbReference>
<dbReference type="Pfam" id="PF00684">
    <property type="entry name" value="DnaJ_CXXCXGXG"/>
    <property type="match status" value="1"/>
</dbReference>
<dbReference type="PRINTS" id="PR00625">
    <property type="entry name" value="JDOMAIN"/>
</dbReference>
<dbReference type="SMART" id="SM00271">
    <property type="entry name" value="DnaJ"/>
    <property type="match status" value="1"/>
</dbReference>
<dbReference type="SUPFAM" id="SSF46565">
    <property type="entry name" value="Chaperone J-domain"/>
    <property type="match status" value="1"/>
</dbReference>
<dbReference type="SUPFAM" id="SSF57938">
    <property type="entry name" value="DnaJ/Hsp40 cysteine-rich domain"/>
    <property type="match status" value="1"/>
</dbReference>
<dbReference type="SUPFAM" id="SSF49493">
    <property type="entry name" value="HSP40/DnaJ peptide-binding domain"/>
    <property type="match status" value="2"/>
</dbReference>
<dbReference type="PROSITE" id="PS00636">
    <property type="entry name" value="DNAJ_1"/>
    <property type="match status" value="1"/>
</dbReference>
<dbReference type="PROSITE" id="PS50076">
    <property type="entry name" value="DNAJ_2"/>
    <property type="match status" value="1"/>
</dbReference>
<dbReference type="PROSITE" id="PS51188">
    <property type="entry name" value="ZF_CR"/>
    <property type="match status" value="1"/>
</dbReference>
<protein>
    <recommendedName>
        <fullName evidence="1">Chaperone protein DnaJ</fullName>
    </recommendedName>
</protein>
<feature type="chain" id="PRO_1000085307" description="Chaperone protein DnaJ">
    <location>
        <begin position="1"/>
        <end position="374"/>
    </location>
</feature>
<feature type="domain" description="J" evidence="1">
    <location>
        <begin position="5"/>
        <end position="70"/>
    </location>
</feature>
<feature type="repeat" description="CXXCXGXG motif">
    <location>
        <begin position="142"/>
        <end position="149"/>
    </location>
</feature>
<feature type="repeat" description="CXXCXGXG motif">
    <location>
        <begin position="159"/>
        <end position="166"/>
    </location>
</feature>
<feature type="repeat" description="CXXCXGXG motif">
    <location>
        <begin position="181"/>
        <end position="188"/>
    </location>
</feature>
<feature type="repeat" description="CXXCXGXG motif">
    <location>
        <begin position="195"/>
        <end position="202"/>
    </location>
</feature>
<feature type="zinc finger region" description="CR-type" evidence="1">
    <location>
        <begin position="129"/>
        <end position="207"/>
    </location>
</feature>
<feature type="binding site" evidence="1">
    <location>
        <position position="142"/>
    </location>
    <ligand>
        <name>Zn(2+)</name>
        <dbReference type="ChEBI" id="CHEBI:29105"/>
        <label>1</label>
    </ligand>
</feature>
<feature type="binding site" evidence="1">
    <location>
        <position position="145"/>
    </location>
    <ligand>
        <name>Zn(2+)</name>
        <dbReference type="ChEBI" id="CHEBI:29105"/>
        <label>1</label>
    </ligand>
</feature>
<feature type="binding site" evidence="1">
    <location>
        <position position="159"/>
    </location>
    <ligand>
        <name>Zn(2+)</name>
        <dbReference type="ChEBI" id="CHEBI:29105"/>
        <label>2</label>
    </ligand>
</feature>
<feature type="binding site" evidence="1">
    <location>
        <position position="162"/>
    </location>
    <ligand>
        <name>Zn(2+)</name>
        <dbReference type="ChEBI" id="CHEBI:29105"/>
        <label>2</label>
    </ligand>
</feature>
<feature type="binding site" evidence="1">
    <location>
        <position position="181"/>
    </location>
    <ligand>
        <name>Zn(2+)</name>
        <dbReference type="ChEBI" id="CHEBI:29105"/>
        <label>2</label>
    </ligand>
</feature>
<feature type="binding site" evidence="1">
    <location>
        <position position="184"/>
    </location>
    <ligand>
        <name>Zn(2+)</name>
        <dbReference type="ChEBI" id="CHEBI:29105"/>
        <label>2</label>
    </ligand>
</feature>
<feature type="binding site" evidence="1">
    <location>
        <position position="195"/>
    </location>
    <ligand>
        <name>Zn(2+)</name>
        <dbReference type="ChEBI" id="CHEBI:29105"/>
        <label>1</label>
    </ligand>
</feature>
<feature type="binding site" evidence="1">
    <location>
        <position position="198"/>
    </location>
    <ligand>
        <name>Zn(2+)</name>
        <dbReference type="ChEBI" id="CHEBI:29105"/>
        <label>1</label>
    </ligand>
</feature>
<proteinExistence type="inferred from homology"/>
<name>DNAJ_SODGM</name>
<reference key="1">
    <citation type="journal article" date="2006" name="Genome Res.">
        <title>Massive genome erosion and functional adaptations provide insights into the symbiotic lifestyle of Sodalis glossinidius in the tsetse host.</title>
        <authorList>
            <person name="Toh H."/>
            <person name="Weiss B.L."/>
            <person name="Perkin S.A.H."/>
            <person name="Yamashita A."/>
            <person name="Oshima K."/>
            <person name="Hattori M."/>
            <person name="Aksoy S."/>
        </authorList>
    </citation>
    <scope>NUCLEOTIDE SEQUENCE [LARGE SCALE GENOMIC DNA]</scope>
    <source>
        <strain>morsitans</strain>
    </source>
</reference>
<gene>
    <name evidence="1" type="primary">dnaJ</name>
    <name type="ordered locus">SG0410</name>
</gene>